<proteinExistence type="inferred from homology"/>
<comment type="similarity">
    <text evidence="1">Belongs to the IcaT/YfdF family.</text>
</comment>
<reference key="1">
    <citation type="journal article" date="1997" name="Science">
        <title>The complete genome sequence of Escherichia coli K-12.</title>
        <authorList>
            <person name="Blattner F.R."/>
            <person name="Plunkett G. III"/>
            <person name="Bloch C.A."/>
            <person name="Perna N.T."/>
            <person name="Burland V."/>
            <person name="Riley M."/>
            <person name="Collado-Vides J."/>
            <person name="Glasner J.D."/>
            <person name="Rode C.K."/>
            <person name="Mayhew G.F."/>
            <person name="Gregor J."/>
            <person name="Davis N.W."/>
            <person name="Kirkpatrick H.A."/>
            <person name="Goeden M.A."/>
            <person name="Rose D.J."/>
            <person name="Mau B."/>
            <person name="Shao Y."/>
        </authorList>
    </citation>
    <scope>NUCLEOTIDE SEQUENCE [LARGE SCALE GENOMIC DNA]</scope>
    <source>
        <strain>K12 / MG1655 / ATCC 47076</strain>
    </source>
</reference>
<reference key="2">
    <citation type="journal article" date="2006" name="Mol. Syst. Biol.">
        <title>Highly accurate genome sequences of Escherichia coli K-12 strains MG1655 and W3110.</title>
        <authorList>
            <person name="Hayashi K."/>
            <person name="Morooka N."/>
            <person name="Yamamoto Y."/>
            <person name="Fujita K."/>
            <person name="Isono K."/>
            <person name="Choi S."/>
            <person name="Ohtsubo E."/>
            <person name="Baba T."/>
            <person name="Wanner B.L."/>
            <person name="Mori H."/>
            <person name="Horiuchi T."/>
        </authorList>
    </citation>
    <scope>NUCLEOTIDE SEQUENCE [LARGE SCALE GENOMIC DNA]</scope>
    <source>
        <strain>K12 / W3110 / ATCC 27325 / DSM 5911</strain>
    </source>
</reference>
<protein>
    <recommendedName>
        <fullName>Uncharacterized protein YfdF</fullName>
    </recommendedName>
</protein>
<keyword id="KW-1185">Reference proteome</keyword>
<accession>P76505</accession>
<accession>Q2MAL3</accession>
<sequence>MLPSISINNTSAAYPESINENNNDEVNGLVQEFKNLFNGKEGISTCIKHLLELIKNAIRVNDDPYRFNINNSSVTYIDIDSNDTDHITIGIDNQEPIELPANYKDKELVRTIINDNIVEKTHDINNKEMIFSALKEIYDGDPGFIFDKISHKLRHTVTEFDESGKSEPTDLFTWYGKDKKGDSLAIVIKNKNGNDYLSLGYYDQDDYHIQRGIRINGDSLTQYCSENARSASAWFESSKAIMAESFATGSDHQVVNELNGERLREPNDVFKRYGRAIRYDFQVDDAKYKCDHLKEIVSTLVGNKINVGHSQKIYKHFKDLEGKIEERLQNRQAEYQNEINQPSAPGVNFDDI</sequence>
<feature type="chain" id="PRO_0000169201" description="Uncharacterized protein YfdF">
    <location>
        <begin position="1"/>
        <end position="352"/>
    </location>
</feature>
<evidence type="ECO:0000305" key="1"/>
<organism>
    <name type="scientific">Escherichia coli (strain K12)</name>
    <dbReference type="NCBI Taxonomy" id="83333"/>
    <lineage>
        <taxon>Bacteria</taxon>
        <taxon>Pseudomonadati</taxon>
        <taxon>Pseudomonadota</taxon>
        <taxon>Gammaproteobacteria</taxon>
        <taxon>Enterobacterales</taxon>
        <taxon>Enterobacteriaceae</taxon>
        <taxon>Escherichia</taxon>
    </lineage>
</organism>
<name>YFDF_ECOLI</name>
<gene>
    <name type="primary">yfdF</name>
    <name type="ordered locus">b2345</name>
    <name type="ordered locus">JW2342</name>
</gene>
<dbReference type="EMBL" id="U00096">
    <property type="protein sequence ID" value="AAC75405.1"/>
    <property type="molecule type" value="Genomic_DNA"/>
</dbReference>
<dbReference type="EMBL" id="AP009048">
    <property type="protein sequence ID" value="BAE76693.1"/>
    <property type="molecule type" value="Genomic_DNA"/>
</dbReference>
<dbReference type="PIR" id="G65007">
    <property type="entry name" value="G65007"/>
</dbReference>
<dbReference type="RefSeq" id="NP_416847.1">
    <property type="nucleotide sequence ID" value="NC_000913.3"/>
</dbReference>
<dbReference type="RefSeq" id="WP_000937788.1">
    <property type="nucleotide sequence ID" value="NZ_LN832404.1"/>
</dbReference>
<dbReference type="SMR" id="P76505"/>
<dbReference type="BioGRID" id="4260537">
    <property type="interactions" value="49"/>
</dbReference>
<dbReference type="BioGRID" id="851160">
    <property type="interactions" value="1"/>
</dbReference>
<dbReference type="FunCoup" id="P76505">
    <property type="interactions" value="116"/>
</dbReference>
<dbReference type="IntAct" id="P76505">
    <property type="interactions" value="1"/>
</dbReference>
<dbReference type="STRING" id="511145.b2345"/>
<dbReference type="PaxDb" id="511145-b2345"/>
<dbReference type="EnsemblBacteria" id="AAC75405">
    <property type="protein sequence ID" value="AAC75405"/>
    <property type="gene ID" value="b2345"/>
</dbReference>
<dbReference type="GeneID" id="946819"/>
<dbReference type="KEGG" id="ecj:JW2342"/>
<dbReference type="KEGG" id="eco:b2345"/>
<dbReference type="KEGG" id="ecoc:C3026_13050"/>
<dbReference type="PATRIC" id="fig|511145.12.peg.2441"/>
<dbReference type="EchoBASE" id="EB3882"/>
<dbReference type="HOGENOM" id="CLU_643626_0_0_6"/>
<dbReference type="InParanoid" id="P76505"/>
<dbReference type="OMA" id="NDNPDRF"/>
<dbReference type="BioCyc" id="EcoCyc:G7215-MONOMER"/>
<dbReference type="PRO" id="PR:P76505"/>
<dbReference type="Proteomes" id="UP000000625">
    <property type="component" value="Chromosome"/>
</dbReference>